<comment type="function">
    <text>Involved in the transposition of the insertion sequence IS3.</text>
</comment>
<comment type="similarity">
    <text evidence="2">Belongs to the transposase IS3/IS150/IS904 family.</text>
</comment>
<organism>
    <name type="scientific">Escherichia coli (strain K12)</name>
    <dbReference type="NCBI Taxonomy" id="83333"/>
    <lineage>
        <taxon>Bacteria</taxon>
        <taxon>Pseudomonadati</taxon>
        <taxon>Pseudomonadota</taxon>
        <taxon>Gammaproteobacteria</taxon>
        <taxon>Enterobacterales</taxon>
        <taxon>Enterobacteriaceae</taxon>
        <taxon>Escherichia</taxon>
    </lineage>
</organism>
<keyword id="KW-0233">DNA recombination</keyword>
<keyword id="KW-0238">DNA-binding</keyword>
<keyword id="KW-1185">Reference proteome</keyword>
<keyword id="KW-0814">Transposable element</keyword>
<keyword id="KW-0815">Transposition</keyword>
<evidence type="ECO:0000255" key="1">
    <source>
        <dbReference type="PROSITE-ProRule" id="PRU00457"/>
    </source>
</evidence>
<evidence type="ECO:0000305" key="2"/>
<feature type="chain" id="PRO_0000075415" description="Transposase InsF for insertion sequence IS3A">
    <location>
        <begin position="1"/>
        <end position="288"/>
    </location>
</feature>
<feature type="domain" description="Integrase catalytic" evidence="1">
    <location>
        <begin position="124"/>
        <end position="287"/>
    </location>
</feature>
<accession>P0CF79</accession>
<accession>O08009</accession>
<accession>O08012</accession>
<accession>O08304</accession>
<accession>P05822</accession>
<accession>P77673</accession>
<accession>Q2MBI8</accession>
<dbReference type="EMBL" id="X02311">
    <property type="protein sequence ID" value="CAB37974.1"/>
    <property type="molecule type" value="Genomic_DNA"/>
</dbReference>
<dbReference type="EMBL" id="U73857">
    <property type="protein sequence ID" value="AAB18027.1"/>
    <property type="molecule type" value="Genomic_DNA"/>
</dbReference>
<dbReference type="EMBL" id="U00096">
    <property type="protein sequence ID" value="AAC73402.1"/>
    <property type="molecule type" value="Genomic_DNA"/>
</dbReference>
<dbReference type="EMBL" id="AP009048">
    <property type="protein sequence ID" value="BAE76084.1"/>
    <property type="molecule type" value="Genomic_DNA"/>
</dbReference>
<dbReference type="PIR" id="C64756">
    <property type="entry name" value="TQECI3"/>
</dbReference>
<dbReference type="RefSeq" id="NP_061381.1">
    <property type="nucleotide sequence ID" value="NC_002483.1"/>
</dbReference>
<dbReference type="RefSeq" id="NP_414833.1">
    <property type="nucleotide sequence ID" value="NC_000913.3"/>
</dbReference>
<dbReference type="SMR" id="P0CF79"/>
<dbReference type="FunCoup" id="P0CF79">
    <property type="interactions" value="11"/>
</dbReference>
<dbReference type="STRING" id="511145.b0299"/>
<dbReference type="PaxDb" id="511145-b0299"/>
<dbReference type="EnsemblBacteria" id="AAC73402">
    <property type="protein sequence ID" value="AAC73402"/>
    <property type="gene ID" value="b0299"/>
</dbReference>
<dbReference type="GeneID" id="944948"/>
<dbReference type="KEGG" id="ecj:JW0293"/>
<dbReference type="KEGG" id="eco:b0299"/>
<dbReference type="KEGG" id="eco:b0372"/>
<dbReference type="KEGG" id="eco:b0541"/>
<dbReference type="KEGG" id="eco:b1026"/>
<dbReference type="KEGG" id="eco:b2089"/>
<dbReference type="KEGG" id="ecoc:C3026_01470"/>
<dbReference type="KEGG" id="ecoc:C3026_02660"/>
<dbReference type="KEGG" id="ecoc:C3026_06250"/>
<dbReference type="KEGG" id="ecoc:C3026_11730"/>
<dbReference type="KEGG" id="ecoc:C3026_24100"/>
<dbReference type="KEGG" id="ecoc:C3026_24645"/>
<dbReference type="EchoBASE" id="EB4710"/>
<dbReference type="eggNOG" id="COG2801">
    <property type="taxonomic scope" value="Bacteria"/>
</dbReference>
<dbReference type="HOGENOM" id="CLU_027402_4_2_6"/>
<dbReference type="InParanoid" id="P0CF79"/>
<dbReference type="OMA" id="DNARCES"/>
<dbReference type="PhylomeDB" id="P0CF79"/>
<dbReference type="BioCyc" id="EcoCyc:G7126-MONOMER"/>
<dbReference type="PRO" id="PR:P0CF79"/>
<dbReference type="Proteomes" id="UP000000625">
    <property type="component" value="Chromosome"/>
</dbReference>
<dbReference type="GO" id="GO:0003677">
    <property type="term" value="F:DNA binding"/>
    <property type="evidence" value="ECO:0007669"/>
    <property type="project" value="UniProtKB-KW"/>
</dbReference>
<dbReference type="GO" id="GO:0015074">
    <property type="term" value="P:DNA integration"/>
    <property type="evidence" value="ECO:0007669"/>
    <property type="project" value="InterPro"/>
</dbReference>
<dbReference type="GO" id="GO:0006310">
    <property type="term" value="P:DNA recombination"/>
    <property type="evidence" value="ECO:0007669"/>
    <property type="project" value="UniProtKB-KW"/>
</dbReference>
<dbReference type="GO" id="GO:0032196">
    <property type="term" value="P:transposition"/>
    <property type="evidence" value="ECO:0000314"/>
    <property type="project" value="EcoCyc"/>
</dbReference>
<dbReference type="FunFam" id="3.30.420.10:FF:000030">
    <property type="entry name" value="IS3, transposase orfB"/>
    <property type="match status" value="1"/>
</dbReference>
<dbReference type="Gene3D" id="3.30.420.10">
    <property type="entry name" value="Ribonuclease H-like superfamily/Ribonuclease H"/>
    <property type="match status" value="1"/>
</dbReference>
<dbReference type="InterPro" id="IPR025948">
    <property type="entry name" value="HTH-like_dom"/>
</dbReference>
<dbReference type="InterPro" id="IPR001584">
    <property type="entry name" value="Integrase_cat-core"/>
</dbReference>
<dbReference type="InterPro" id="IPR012337">
    <property type="entry name" value="RNaseH-like_sf"/>
</dbReference>
<dbReference type="InterPro" id="IPR036397">
    <property type="entry name" value="RNaseH_sf"/>
</dbReference>
<dbReference type="InterPro" id="IPR048020">
    <property type="entry name" value="Transpos_IS3"/>
</dbReference>
<dbReference type="InterPro" id="IPR050900">
    <property type="entry name" value="Transposase_IS3/IS150/IS904"/>
</dbReference>
<dbReference type="NCBIfam" id="NF033516">
    <property type="entry name" value="transpos_IS3"/>
    <property type="match status" value="1"/>
</dbReference>
<dbReference type="PANTHER" id="PTHR46889:SF6">
    <property type="entry name" value="TRANSPOSASE INSF FOR INSERTION SEQUENCE IS3B"/>
    <property type="match status" value="1"/>
</dbReference>
<dbReference type="PANTHER" id="PTHR46889">
    <property type="entry name" value="TRANSPOSASE INSF FOR INSERTION SEQUENCE IS3B-RELATED"/>
    <property type="match status" value="1"/>
</dbReference>
<dbReference type="Pfam" id="PF13276">
    <property type="entry name" value="HTH_21"/>
    <property type="match status" value="1"/>
</dbReference>
<dbReference type="Pfam" id="PF00665">
    <property type="entry name" value="rve"/>
    <property type="match status" value="1"/>
</dbReference>
<dbReference type="Pfam" id="PF13333">
    <property type="entry name" value="rve_2"/>
    <property type="match status" value="1"/>
</dbReference>
<dbReference type="SUPFAM" id="SSF53098">
    <property type="entry name" value="Ribonuclease H-like"/>
    <property type="match status" value="1"/>
</dbReference>
<dbReference type="PROSITE" id="PS50994">
    <property type="entry name" value="INTEGRASE"/>
    <property type="match status" value="1"/>
</dbReference>
<protein>
    <recommendedName>
        <fullName>Transposase InsF for insertion sequence IS3A</fullName>
    </recommendedName>
</protein>
<reference key="1">
    <citation type="journal article" date="1985" name="Nucleic Acids Res.">
        <title>Complete sequence of IS3.</title>
        <authorList>
            <person name="Timmerman K.P."/>
            <person name="Tu C.P.D."/>
        </authorList>
    </citation>
    <scope>NUCLEOTIDE SEQUENCE [GENOMIC DNA]</scope>
</reference>
<reference key="2">
    <citation type="submission" date="1997-01" db="EMBL/GenBank/DDBJ databases">
        <title>Sequence of minutes 4-25 of Escherichia coli.</title>
        <authorList>
            <person name="Chung E."/>
            <person name="Allen E."/>
            <person name="Araujo R."/>
            <person name="Aparicio A.M."/>
            <person name="Davis K."/>
            <person name="Duncan M."/>
            <person name="Federspiel N."/>
            <person name="Hyman R."/>
            <person name="Kalman S."/>
            <person name="Komp C."/>
            <person name="Kurdi O."/>
            <person name="Lew H."/>
            <person name="Lin D."/>
            <person name="Namath A."/>
            <person name="Oefner P."/>
            <person name="Roberts D."/>
            <person name="Schramm S."/>
            <person name="Davis R.W."/>
        </authorList>
    </citation>
    <scope>NUCLEOTIDE SEQUENCE [LARGE SCALE GENOMIC DNA]</scope>
    <source>
        <strain>K12 / MG1655 / ATCC 47076</strain>
    </source>
</reference>
<reference key="3">
    <citation type="journal article" date="1997" name="Science">
        <title>The complete genome sequence of Escherichia coli K-12.</title>
        <authorList>
            <person name="Blattner F.R."/>
            <person name="Plunkett G. III"/>
            <person name="Bloch C.A."/>
            <person name="Perna N.T."/>
            <person name="Burland V."/>
            <person name="Riley M."/>
            <person name="Collado-Vides J."/>
            <person name="Glasner J.D."/>
            <person name="Rode C.K."/>
            <person name="Mayhew G.F."/>
            <person name="Gregor J."/>
            <person name="Davis N.W."/>
            <person name="Kirkpatrick H.A."/>
            <person name="Goeden M.A."/>
            <person name="Rose D.J."/>
            <person name="Mau B."/>
            <person name="Shao Y."/>
        </authorList>
    </citation>
    <scope>NUCLEOTIDE SEQUENCE [LARGE SCALE GENOMIC DNA]</scope>
    <source>
        <strain>K12 / MG1655 / ATCC 47076</strain>
    </source>
</reference>
<reference key="4">
    <citation type="journal article" date="2006" name="Mol. Syst. Biol.">
        <title>Highly accurate genome sequences of Escherichia coli K-12 strains MG1655 and W3110.</title>
        <authorList>
            <person name="Hayashi K."/>
            <person name="Morooka N."/>
            <person name="Yamamoto Y."/>
            <person name="Fujita K."/>
            <person name="Isono K."/>
            <person name="Choi S."/>
            <person name="Ohtsubo E."/>
            <person name="Baba T."/>
            <person name="Wanner B.L."/>
            <person name="Mori H."/>
            <person name="Horiuchi T."/>
        </authorList>
    </citation>
    <scope>NUCLEOTIDE SEQUENCE [LARGE SCALE GENOMIC DNA]</scope>
    <source>
        <strain>K12 / W3110 / ATCC 27325 / DSM 5911</strain>
    </source>
</reference>
<name>INSF1_ECOLI</name>
<proteinExistence type="inferred from homology"/>
<sequence length="288" mass="33540">MKYVFIEKHQAEFSIKAMCRVLRVARSGWYTWCQRRTRISTRQQFRQHCDSVVLAAFTRSKQRYGAPRLTDELRAQGYPFNVKTVAASLRRQGLRAKASRKFSPVSYRAHGLPVSENLLEQDFYASGPNQKWAGDITYLRTDEGWLYLAVVIDLWSRAVIGWSMSPRMTAQLACDALQMALWRRKRPRNVIVHTDRGGQYCSADYQAQLKRHNLRGSMSAKGCCYDNACVESFFHSLKVECIHGEHFISREIMRATVFNYIECDYNRWRRHSWCGGLSPEQFENKNLA</sequence>
<gene>
    <name type="primary">insF1</name>
    <name type="ordered locus">b0299</name>
    <name type="ordered locus">JW0293</name>
</gene>